<organism>
    <name type="scientific">Conus geographus</name>
    <name type="common">Geography cone</name>
    <name type="synonym">Nubecula geographus</name>
    <dbReference type="NCBI Taxonomy" id="6491"/>
    <lineage>
        <taxon>Eukaryota</taxon>
        <taxon>Metazoa</taxon>
        <taxon>Spiralia</taxon>
        <taxon>Lophotrochozoa</taxon>
        <taxon>Mollusca</taxon>
        <taxon>Gastropoda</taxon>
        <taxon>Caenogastropoda</taxon>
        <taxon>Neogastropoda</taxon>
        <taxon>Conoidea</taxon>
        <taxon>Conidae</taxon>
        <taxon>Conus</taxon>
        <taxon>Gastridium</taxon>
    </lineage>
</organism>
<sequence>MMSKMGAMFVLLLLFTLASSQQEGDVQARKTRPKSDFYRALPRSGSTCTCFTSTNCQGSCECLSPPGCYCSNNGIRQPGCSCTCPGTG</sequence>
<keyword id="KW-0008">Acetylcholine receptor inhibiting toxin</keyword>
<keyword id="KW-0027">Amidation</keyword>
<keyword id="KW-0903">Direct protein sequencing</keyword>
<keyword id="KW-1015">Disulfide bond</keyword>
<keyword id="KW-0379">Hydroxylation</keyword>
<keyword id="KW-0872">Ion channel impairing toxin</keyword>
<keyword id="KW-0528">Neurotoxin</keyword>
<keyword id="KW-0629">Postsynaptic neurotoxin</keyword>
<keyword id="KW-0964">Secreted</keyword>
<keyword id="KW-0732">Signal</keyword>
<keyword id="KW-0800">Toxin</keyword>
<evidence type="ECO:0000255" key="1"/>
<evidence type="ECO:0000269" key="2">
    <source>
    </source>
</evidence>
<evidence type="ECO:0000303" key="3">
    <source>
    </source>
</evidence>
<evidence type="ECO:0000305" key="4"/>
<evidence type="ECO:0000305" key="5">
    <source>
    </source>
</evidence>
<comment type="function">
    <text evidence="2">Alpha-conotoxins act on postsynaptic membranes, they bind to the nicotinic acetylcholine receptors (nAChR) and thus inhibit them. This toxin shows high activity on alpha-9-alpha-10 (CHRNA9-CHRNA10) (IC(50)=9.79 nM) (PubMed:26074268). It also shows weak activity on alpha-3-beta-2 (CHRNA3-CHRNB2) (IC(50)~1 uM), alpha-6/alpha-3-beta-2-beta-3 (CHRNA6/CHRNA3-CHRNB2-CHRNB3) (IC(50)~1 uM) (PubMed:26074268). The toxin binds to the same or overlapping binding sites than conotoxin RgIA (AC P0C1D0) (PubMed:26074268).</text>
</comment>
<comment type="subcellular location">
    <subcellularLocation>
        <location evidence="2">Secreted</location>
    </subcellularLocation>
</comment>
<comment type="tissue specificity">
    <text evidence="5">Expressed by the venom duct.</text>
</comment>
<comment type="domain">
    <text evidence="4">The cysteine framework is VIII (C-C-C-C-C-C-C-C-C-C).</text>
</comment>
<comment type="PTM">
    <text evidence="2">Contains 5 disulfide bonds.</text>
</comment>
<comment type="PTM">
    <text evidence="2">The predominant peptide contains 2 hydroxyprolines, while 2 minor peptides contains 1 and 3 hydroxyprolines.</text>
</comment>
<comment type="mass spectrometry">
    <text>Monoisotopic mass, predominant peptide with 2 hydroxyprolines and 5 disulfide bonds.</text>
</comment>
<comment type="mass spectrometry">
    <text>Monoisotopic mass, minor peptide with 1 hydroxyproline and 5 disulfide bonds.</text>
</comment>
<comment type="mass spectrometry">
    <text>Monoisotopic mass, minor peptide with 3 hydroxyprolines and 5 disulfide bonds.</text>
</comment>
<comment type="miscellaneous">
    <text evidence="2">Negative results: shows no or weak activities on 5-hydroxytryptamine receptor 3A (HTR3A), and alpha-1-beta-1-delta-epsilon (CHRNA1-CHRNB1-CHRND-CHRNE), alpha-3 beta-4 (CHRNA3-CHRNB4), alpha-4 beta-2 (CHRNA3-CHRNB2), and alpha-7/CHRNA7 nAChR.</text>
</comment>
<comment type="similarity">
    <text evidence="4">Belongs to the conotoxin S superfamily.</text>
</comment>
<feature type="signal peptide" evidence="1">
    <location>
        <begin position="1"/>
        <end position="20"/>
    </location>
</feature>
<feature type="propeptide" id="PRO_0000444150" evidence="5">
    <location>
        <begin position="21"/>
        <end position="43"/>
    </location>
</feature>
<feature type="peptide" id="PRO_5004956869" description="Alpha-conotoxin GVIIIB" evidence="5">
    <location>
        <begin position="44"/>
        <end position="87"/>
    </location>
</feature>
<feature type="modified residue" description="Threonine amide" evidence="5">
    <location>
        <position position="87"/>
    </location>
</feature>
<reference key="1">
    <citation type="journal article" date="2014" name="Nat. Commun.">
        <title>Evolution of separate predation- and defence-evoked venoms in carnivorous cone snails.</title>
        <authorList>
            <person name="Dutertre S."/>
            <person name="Jin A.-H."/>
            <person name="Vetter I."/>
            <person name="Hamilton B."/>
            <person name="Sunagar K."/>
            <person name="Lavergne V."/>
            <person name="Dutertre V."/>
            <person name="Fry B.G."/>
            <person name="Antunes A."/>
            <person name="Venter D.J."/>
            <person name="Alewood P.F."/>
            <person name="Lewis R.J."/>
        </authorList>
    </citation>
    <scope>NUCLEOTIDE SEQUENCE [MRNA]</scope>
    <source>
        <tissue>Venom duct</tissue>
    </source>
</reference>
<reference key="2">
    <citation type="journal article" date="2015" name="Biochem. Pharmacol.">
        <title>alphaS-conotoxin GVIIIB potently and selectively blocks alpha9alpha10 nicotinic acetylcholine receptors.</title>
        <authorList>
            <person name="Christensen S.B."/>
            <person name="Bandyopadhyay P.K."/>
            <person name="Olivera B.M."/>
            <person name="McIntosh J.M."/>
        </authorList>
    </citation>
    <scope>NUCLEOTIDE SEQUENCE [MRNA]</scope>
    <scope>PROTEIN SEQUENCE OF 44-58</scope>
    <scope>FUNCTION</scope>
    <scope>SUBCELLULAR LOCATION</scope>
    <scope>PROBABLE AMIDATION AT THR-87</scope>
    <scope>MASS SPECTROMETRY</scope>
    <source>
        <tissue>Venom</tissue>
        <tissue>Venom duct</tissue>
    </source>
</reference>
<protein>
    <recommendedName>
        <fullName evidence="4">Alpha-conotoxin GVIIIB</fullName>
    </recommendedName>
    <alternativeName>
        <fullName evidence="3">AlphaS-conotoxin GVIIIB</fullName>
    </alternativeName>
</protein>
<dbReference type="EMBL" id="AB910871">
    <property type="protein sequence ID" value="BAO65639.1"/>
    <property type="molecule type" value="mRNA"/>
</dbReference>
<dbReference type="GO" id="GO:0005576">
    <property type="term" value="C:extracellular region"/>
    <property type="evidence" value="ECO:0007669"/>
    <property type="project" value="UniProtKB-SubCell"/>
</dbReference>
<dbReference type="GO" id="GO:0035792">
    <property type="term" value="C:host cell postsynaptic membrane"/>
    <property type="evidence" value="ECO:0007669"/>
    <property type="project" value="UniProtKB-KW"/>
</dbReference>
<dbReference type="GO" id="GO:0030550">
    <property type="term" value="F:acetylcholine receptor inhibitor activity"/>
    <property type="evidence" value="ECO:0007669"/>
    <property type="project" value="UniProtKB-KW"/>
</dbReference>
<dbReference type="GO" id="GO:0099106">
    <property type="term" value="F:ion channel regulator activity"/>
    <property type="evidence" value="ECO:0007669"/>
    <property type="project" value="UniProtKB-KW"/>
</dbReference>
<dbReference type="GO" id="GO:0090729">
    <property type="term" value="F:toxin activity"/>
    <property type="evidence" value="ECO:0007669"/>
    <property type="project" value="UniProtKB-KW"/>
</dbReference>
<name>CSA8A_CONGE</name>
<proteinExistence type="evidence at protein level"/>
<accession>X5IWT5</accession>